<evidence type="ECO:0000250" key="1"/>
<evidence type="ECO:0000255" key="2">
    <source>
        <dbReference type="PROSITE-ProRule" id="PRU01150"/>
    </source>
</evidence>
<accession>Q53CG4</accession>
<name>CX6B1_MACMU</name>
<comment type="function">
    <text evidence="1">Connects the two COX monomers into the physiological dimeric form.</text>
</comment>
<comment type="subcellular location">
    <subcellularLocation>
        <location evidence="1">Mitochondrion intermembrane space</location>
    </subcellularLocation>
</comment>
<gene>
    <name type="primary">COX6B1</name>
    <name type="synonym">COX6B</name>
</gene>
<keyword id="KW-1015">Disulfide bond</keyword>
<keyword id="KW-0496">Mitochondrion</keyword>
<keyword id="KW-1185">Reference proteome</keyword>
<sequence>MAEEDIETKIKNYKTAPFDSRFPNQNQTRNCWQNYLDFHRCQKAMTTKGGNVSVCEWYQRVYQSLCPTSWVTDWDEQRAEGTFPGKI</sequence>
<protein>
    <recommendedName>
        <fullName>Cytochrome c oxidase subunit 6B1</fullName>
    </recommendedName>
    <alternativeName>
        <fullName>Cytochrome c oxidase subunit VIb isoform 1</fullName>
        <shortName>COX VIb-1</shortName>
    </alternativeName>
</protein>
<reference key="1">
    <citation type="journal article" date="2005" name="Proc. Natl. Acad. Sci. U.S.A.">
        <title>Rapid electrostatic evolution at the binding site for cytochrome c on cytochrome c oxidase in anthropoid primates.</title>
        <authorList>
            <person name="Schmidt T.R."/>
            <person name="Wildman D.E."/>
            <person name="Uddin M."/>
            <person name="Opazo J.C."/>
            <person name="Goodman M."/>
            <person name="Grossman L.I."/>
        </authorList>
    </citation>
    <scope>NUCLEOTIDE SEQUENCE [MRNA]</scope>
</reference>
<feature type="chain" id="PRO_0000194914" description="Cytochrome c oxidase subunit 6B1">
    <location>
        <begin position="1"/>
        <end position="87"/>
    </location>
</feature>
<feature type="domain" description="CHCH" evidence="2">
    <location>
        <begin position="28"/>
        <end position="74"/>
    </location>
</feature>
<feature type="short sequence motif" description="Cx9C motif" evidence="2">
    <location>
        <begin position="31"/>
        <end position="41"/>
    </location>
</feature>
<feature type="short sequence motif" description="Cx10C motif" evidence="2">
    <location>
        <begin position="55"/>
        <end position="66"/>
    </location>
</feature>
<feature type="disulfide bond" evidence="2">
    <location>
        <begin position="31"/>
        <end position="66"/>
    </location>
</feature>
<feature type="disulfide bond" evidence="2">
    <location>
        <begin position="41"/>
        <end position="55"/>
    </location>
</feature>
<organism>
    <name type="scientific">Macaca mulatta</name>
    <name type="common">Rhesus macaque</name>
    <dbReference type="NCBI Taxonomy" id="9544"/>
    <lineage>
        <taxon>Eukaryota</taxon>
        <taxon>Metazoa</taxon>
        <taxon>Chordata</taxon>
        <taxon>Craniata</taxon>
        <taxon>Vertebrata</taxon>
        <taxon>Euteleostomi</taxon>
        <taxon>Mammalia</taxon>
        <taxon>Eutheria</taxon>
        <taxon>Euarchontoglires</taxon>
        <taxon>Primates</taxon>
        <taxon>Haplorrhini</taxon>
        <taxon>Catarrhini</taxon>
        <taxon>Cercopithecidae</taxon>
        <taxon>Cercopithecinae</taxon>
        <taxon>Macaca</taxon>
    </lineage>
</organism>
<dbReference type="EMBL" id="AY585854">
    <property type="protein sequence ID" value="AAW03183.1"/>
    <property type="molecule type" value="mRNA"/>
</dbReference>
<dbReference type="RefSeq" id="NP_001035371.1">
    <property type="nucleotide sequence ID" value="NM_001040281.1"/>
</dbReference>
<dbReference type="RefSeq" id="XP_014979051.1">
    <property type="nucleotide sequence ID" value="XM_015123565.2"/>
</dbReference>
<dbReference type="SMR" id="Q53CG4"/>
<dbReference type="FunCoup" id="Q53CG4">
    <property type="interactions" value="1255"/>
</dbReference>
<dbReference type="STRING" id="9544.ENSMMUP00000064416"/>
<dbReference type="PaxDb" id="9544-ENSMMUP00000022035"/>
<dbReference type="Ensembl" id="ENSMMUT00000023552.4">
    <property type="protein sequence ID" value="ENSMMUP00000022035.2"/>
    <property type="gene ID" value="ENSMMUG00000055747.1"/>
</dbReference>
<dbReference type="Ensembl" id="ENSMMUT00000098278.1">
    <property type="protein sequence ID" value="ENSMMUP00000065481.1"/>
    <property type="gene ID" value="ENSMMUG00000055747.1"/>
</dbReference>
<dbReference type="GeneID" id="692062"/>
<dbReference type="KEGG" id="mcc:692062"/>
<dbReference type="CTD" id="1340"/>
<dbReference type="VEuPathDB" id="HostDB:ENSMMUG00000055747"/>
<dbReference type="VGNC" id="VGNC:109606">
    <property type="gene designation" value="COX6B1"/>
</dbReference>
<dbReference type="eggNOG" id="KOG3057">
    <property type="taxonomic scope" value="Eukaryota"/>
</dbReference>
<dbReference type="GeneTree" id="ENSGT00940000156204"/>
<dbReference type="HOGENOM" id="CLU_133964_3_1_1"/>
<dbReference type="InParanoid" id="Q53CG4"/>
<dbReference type="OMA" id="NEWIAKW"/>
<dbReference type="OrthoDB" id="1107506at2759"/>
<dbReference type="TreeFam" id="TF105065"/>
<dbReference type="Proteomes" id="UP000006718">
    <property type="component" value="Chromosome 19"/>
</dbReference>
<dbReference type="Bgee" id="ENSMMUG00000055747">
    <property type="expression patterns" value="Expressed in heart and 22 other cell types or tissues"/>
</dbReference>
<dbReference type="ExpressionAtlas" id="Q53CG4">
    <property type="expression patterns" value="baseline"/>
</dbReference>
<dbReference type="GO" id="GO:0005743">
    <property type="term" value="C:mitochondrial inner membrane"/>
    <property type="evidence" value="ECO:0000318"/>
    <property type="project" value="GO_Central"/>
</dbReference>
<dbReference type="GO" id="GO:0005758">
    <property type="term" value="C:mitochondrial intermembrane space"/>
    <property type="evidence" value="ECO:0007669"/>
    <property type="project" value="UniProtKB-SubCell"/>
</dbReference>
<dbReference type="GO" id="GO:0005739">
    <property type="term" value="C:mitochondrion"/>
    <property type="evidence" value="ECO:0000318"/>
    <property type="project" value="GO_Central"/>
</dbReference>
<dbReference type="GO" id="GO:0045277">
    <property type="term" value="C:respiratory chain complex IV"/>
    <property type="evidence" value="ECO:0000318"/>
    <property type="project" value="GO_Central"/>
</dbReference>
<dbReference type="CDD" id="cd00926">
    <property type="entry name" value="Cyt_c_Oxidase_VIb"/>
    <property type="match status" value="1"/>
</dbReference>
<dbReference type="FunFam" id="1.10.10.140:FF:000001">
    <property type="entry name" value="Cytochrome c oxidase subunit 6B1"/>
    <property type="match status" value="1"/>
</dbReference>
<dbReference type="Gene3D" id="1.10.10.140">
    <property type="entry name" value="Cytochrome c oxidase, subunit VIb"/>
    <property type="match status" value="1"/>
</dbReference>
<dbReference type="InterPro" id="IPR048280">
    <property type="entry name" value="COX6B-like"/>
</dbReference>
<dbReference type="InterPro" id="IPR036549">
    <property type="entry name" value="CX6/COA6-like_sf"/>
</dbReference>
<dbReference type="InterPro" id="IPR003213">
    <property type="entry name" value="Cyt_c_oxidase_su6B"/>
</dbReference>
<dbReference type="PANTHER" id="PTHR11387">
    <property type="entry name" value="CYTOCHROME C OXIDASE SUBUNIT 6B"/>
    <property type="match status" value="1"/>
</dbReference>
<dbReference type="Pfam" id="PF02297">
    <property type="entry name" value="COX6B"/>
    <property type="match status" value="1"/>
</dbReference>
<dbReference type="PIRSF" id="PIRSF000278">
    <property type="entry name" value="Cyt_c_oxidase_6B"/>
    <property type="match status" value="1"/>
</dbReference>
<dbReference type="SUPFAM" id="SSF47694">
    <property type="entry name" value="Cytochrome c oxidase subunit h"/>
    <property type="match status" value="1"/>
</dbReference>
<dbReference type="PROSITE" id="PS51808">
    <property type="entry name" value="CHCH"/>
    <property type="match status" value="1"/>
</dbReference>
<proteinExistence type="inferred from homology"/>